<dbReference type="EMBL" id="CP000382">
    <property type="protein sequence ID" value="ABK60745.1"/>
    <property type="molecule type" value="Genomic_DNA"/>
</dbReference>
<dbReference type="RefSeq" id="WP_011722846.1">
    <property type="nucleotide sequence ID" value="NC_008593.1"/>
</dbReference>
<dbReference type="SMR" id="A0Q2L0"/>
<dbReference type="STRING" id="386415.NT01CX_0370"/>
<dbReference type="KEGG" id="cno:NT01CX_0370"/>
<dbReference type="eggNOG" id="COG1219">
    <property type="taxonomic scope" value="Bacteria"/>
</dbReference>
<dbReference type="HOGENOM" id="CLU_014218_8_2_9"/>
<dbReference type="Proteomes" id="UP000008220">
    <property type="component" value="Chromosome"/>
</dbReference>
<dbReference type="GO" id="GO:0009376">
    <property type="term" value="C:HslUV protease complex"/>
    <property type="evidence" value="ECO:0007669"/>
    <property type="project" value="TreeGrafter"/>
</dbReference>
<dbReference type="GO" id="GO:0005524">
    <property type="term" value="F:ATP binding"/>
    <property type="evidence" value="ECO:0007669"/>
    <property type="project" value="UniProtKB-UniRule"/>
</dbReference>
<dbReference type="GO" id="GO:0016887">
    <property type="term" value="F:ATP hydrolysis activity"/>
    <property type="evidence" value="ECO:0007669"/>
    <property type="project" value="InterPro"/>
</dbReference>
<dbReference type="GO" id="GO:0140662">
    <property type="term" value="F:ATP-dependent protein folding chaperone"/>
    <property type="evidence" value="ECO:0007669"/>
    <property type="project" value="InterPro"/>
</dbReference>
<dbReference type="GO" id="GO:0046983">
    <property type="term" value="F:protein dimerization activity"/>
    <property type="evidence" value="ECO:0007669"/>
    <property type="project" value="InterPro"/>
</dbReference>
<dbReference type="GO" id="GO:0051082">
    <property type="term" value="F:unfolded protein binding"/>
    <property type="evidence" value="ECO:0007669"/>
    <property type="project" value="UniProtKB-UniRule"/>
</dbReference>
<dbReference type="GO" id="GO:0008270">
    <property type="term" value="F:zinc ion binding"/>
    <property type="evidence" value="ECO:0007669"/>
    <property type="project" value="InterPro"/>
</dbReference>
<dbReference type="GO" id="GO:0051301">
    <property type="term" value="P:cell division"/>
    <property type="evidence" value="ECO:0007669"/>
    <property type="project" value="TreeGrafter"/>
</dbReference>
<dbReference type="GO" id="GO:0051603">
    <property type="term" value="P:proteolysis involved in protein catabolic process"/>
    <property type="evidence" value="ECO:0007669"/>
    <property type="project" value="TreeGrafter"/>
</dbReference>
<dbReference type="CDD" id="cd19497">
    <property type="entry name" value="RecA-like_ClpX"/>
    <property type="match status" value="1"/>
</dbReference>
<dbReference type="FunFam" id="1.10.8.60:FF:000002">
    <property type="entry name" value="ATP-dependent Clp protease ATP-binding subunit ClpX"/>
    <property type="match status" value="1"/>
</dbReference>
<dbReference type="FunFam" id="3.40.50.300:FF:000005">
    <property type="entry name" value="ATP-dependent Clp protease ATP-binding subunit ClpX"/>
    <property type="match status" value="1"/>
</dbReference>
<dbReference type="Gene3D" id="1.10.8.60">
    <property type="match status" value="1"/>
</dbReference>
<dbReference type="Gene3D" id="6.20.220.10">
    <property type="entry name" value="ClpX chaperone, C4-type zinc finger domain"/>
    <property type="match status" value="1"/>
</dbReference>
<dbReference type="Gene3D" id="3.40.50.300">
    <property type="entry name" value="P-loop containing nucleotide triphosphate hydrolases"/>
    <property type="match status" value="1"/>
</dbReference>
<dbReference type="HAMAP" id="MF_00175">
    <property type="entry name" value="ClpX"/>
    <property type="match status" value="1"/>
</dbReference>
<dbReference type="InterPro" id="IPR003593">
    <property type="entry name" value="AAA+_ATPase"/>
</dbReference>
<dbReference type="InterPro" id="IPR050052">
    <property type="entry name" value="ATP-dep_Clp_protease_ClpX"/>
</dbReference>
<dbReference type="InterPro" id="IPR003959">
    <property type="entry name" value="ATPase_AAA_core"/>
</dbReference>
<dbReference type="InterPro" id="IPR019489">
    <property type="entry name" value="Clp_ATPase_C"/>
</dbReference>
<dbReference type="InterPro" id="IPR004487">
    <property type="entry name" value="Clp_protease_ATP-bd_su_ClpX"/>
</dbReference>
<dbReference type="InterPro" id="IPR046425">
    <property type="entry name" value="ClpX_bact"/>
</dbReference>
<dbReference type="InterPro" id="IPR027417">
    <property type="entry name" value="P-loop_NTPase"/>
</dbReference>
<dbReference type="InterPro" id="IPR010603">
    <property type="entry name" value="Znf_CppX_C4"/>
</dbReference>
<dbReference type="InterPro" id="IPR038366">
    <property type="entry name" value="Znf_CppX_C4_sf"/>
</dbReference>
<dbReference type="NCBIfam" id="TIGR00382">
    <property type="entry name" value="clpX"/>
    <property type="match status" value="1"/>
</dbReference>
<dbReference type="NCBIfam" id="NF003745">
    <property type="entry name" value="PRK05342.1"/>
    <property type="match status" value="1"/>
</dbReference>
<dbReference type="PANTHER" id="PTHR48102:SF7">
    <property type="entry name" value="ATP-DEPENDENT CLP PROTEASE ATP-BINDING SUBUNIT CLPX-LIKE, MITOCHONDRIAL"/>
    <property type="match status" value="1"/>
</dbReference>
<dbReference type="PANTHER" id="PTHR48102">
    <property type="entry name" value="ATP-DEPENDENT CLP PROTEASE ATP-BINDING SUBUNIT CLPX-LIKE, MITOCHONDRIAL-RELATED"/>
    <property type="match status" value="1"/>
</dbReference>
<dbReference type="Pfam" id="PF07724">
    <property type="entry name" value="AAA_2"/>
    <property type="match status" value="1"/>
</dbReference>
<dbReference type="Pfam" id="PF10431">
    <property type="entry name" value="ClpB_D2-small"/>
    <property type="match status" value="1"/>
</dbReference>
<dbReference type="Pfam" id="PF06689">
    <property type="entry name" value="zf-C4_ClpX"/>
    <property type="match status" value="1"/>
</dbReference>
<dbReference type="SMART" id="SM00382">
    <property type="entry name" value="AAA"/>
    <property type="match status" value="1"/>
</dbReference>
<dbReference type="SMART" id="SM01086">
    <property type="entry name" value="ClpB_D2-small"/>
    <property type="match status" value="1"/>
</dbReference>
<dbReference type="SMART" id="SM00994">
    <property type="entry name" value="zf-C4_ClpX"/>
    <property type="match status" value="1"/>
</dbReference>
<dbReference type="SUPFAM" id="SSF57716">
    <property type="entry name" value="Glucocorticoid receptor-like (DNA-binding domain)"/>
    <property type="match status" value="1"/>
</dbReference>
<dbReference type="SUPFAM" id="SSF52540">
    <property type="entry name" value="P-loop containing nucleoside triphosphate hydrolases"/>
    <property type="match status" value="1"/>
</dbReference>
<dbReference type="PROSITE" id="PS51902">
    <property type="entry name" value="CLPX_ZB"/>
    <property type="match status" value="1"/>
</dbReference>
<proteinExistence type="inferred from homology"/>
<name>CLPX_CLONN</name>
<accession>A0Q2L0</accession>
<organism>
    <name type="scientific">Clostridium novyi (strain NT)</name>
    <dbReference type="NCBI Taxonomy" id="386415"/>
    <lineage>
        <taxon>Bacteria</taxon>
        <taxon>Bacillati</taxon>
        <taxon>Bacillota</taxon>
        <taxon>Clostridia</taxon>
        <taxon>Eubacteriales</taxon>
        <taxon>Clostridiaceae</taxon>
        <taxon>Clostridium</taxon>
    </lineage>
</organism>
<reference key="1">
    <citation type="journal article" date="2006" name="Nat. Biotechnol.">
        <title>The genome and transcriptomes of the anti-tumor agent Clostridium novyi-NT.</title>
        <authorList>
            <person name="Bettegowda C."/>
            <person name="Huang X."/>
            <person name="Lin J."/>
            <person name="Cheong I."/>
            <person name="Kohli M."/>
            <person name="Szabo S.A."/>
            <person name="Zhang X."/>
            <person name="Diaz L.A. Jr."/>
            <person name="Velculescu V.E."/>
            <person name="Parmigiani G."/>
            <person name="Kinzler K.W."/>
            <person name="Vogelstein B."/>
            <person name="Zhou S."/>
        </authorList>
    </citation>
    <scope>NUCLEOTIDE SEQUENCE [LARGE SCALE GENOMIC DNA]</scope>
    <source>
        <strain>NT</strain>
    </source>
</reference>
<keyword id="KW-0067">ATP-binding</keyword>
<keyword id="KW-0143">Chaperone</keyword>
<keyword id="KW-0479">Metal-binding</keyword>
<keyword id="KW-0547">Nucleotide-binding</keyword>
<keyword id="KW-1185">Reference proteome</keyword>
<keyword id="KW-0862">Zinc</keyword>
<evidence type="ECO:0000255" key="1">
    <source>
        <dbReference type="HAMAP-Rule" id="MF_00175"/>
    </source>
</evidence>
<evidence type="ECO:0000255" key="2">
    <source>
        <dbReference type="PROSITE-ProRule" id="PRU01250"/>
    </source>
</evidence>
<evidence type="ECO:0000256" key="3">
    <source>
        <dbReference type="SAM" id="MobiDB-lite"/>
    </source>
</evidence>
<protein>
    <recommendedName>
        <fullName evidence="1">ATP-dependent Clp protease ATP-binding subunit ClpX</fullName>
    </recommendedName>
</protein>
<sequence>MSKYDDKKQLKCSFCGKSQEQVKRLIAGPGVYICDECIDLCSEIITDEFEENTQVDLSSLPKPSEIKNYLDDYVIGQDSAKKALAVAVYNHYKRINSDVDVDDVELQKSNILLLGPTGSGKTLLAQTLARLLNVPFAMADATTLTEAGYVGEDVENILLKLIQNADYDIEKAERGIIYIDEIDKIARKSENPSITRDVSGEGVQQALLKILEGTVASVPPQGGRKHPHQEFIQINTSNILFICGGAFDGLDKIIEKRTRKSSLGFGSTVQSKEEKDIGELLKESVPEDLLKFGLIPEFIGRLPIMVTLQSLDNSALVRILKEPKNALVKQYKKLLLMDNVELEFEDEALKAIADEAIERKTGARGLRSIIEETMRDIMFDIPSQFNIKKVIINKDTIKNKKPELVLTEDGEDRPEIVQTKHKRKSMDPETA</sequence>
<comment type="function">
    <text evidence="1">ATP-dependent specificity component of the Clp protease. It directs the protease to specific substrates. Can perform chaperone functions in the absence of ClpP.</text>
</comment>
<comment type="subunit">
    <text evidence="1">Component of the ClpX-ClpP complex. Forms a hexameric ring that, in the presence of ATP, binds to fourteen ClpP subunits assembled into a disk-like structure with a central cavity, resembling the structure of eukaryotic proteasomes.</text>
</comment>
<comment type="similarity">
    <text evidence="1">Belongs to the ClpX chaperone family.</text>
</comment>
<gene>
    <name evidence="1" type="primary">clpX</name>
    <name type="ordered locus">NT01CX_0370</name>
</gene>
<feature type="chain" id="PRO_1000097943" description="ATP-dependent Clp protease ATP-binding subunit ClpX">
    <location>
        <begin position="1"/>
        <end position="431"/>
    </location>
</feature>
<feature type="domain" description="ClpX-type ZB" evidence="2">
    <location>
        <begin position="1"/>
        <end position="53"/>
    </location>
</feature>
<feature type="region of interest" description="Disordered" evidence="3">
    <location>
        <begin position="408"/>
        <end position="431"/>
    </location>
</feature>
<feature type="binding site" evidence="2">
    <location>
        <position position="12"/>
    </location>
    <ligand>
        <name>Zn(2+)</name>
        <dbReference type="ChEBI" id="CHEBI:29105"/>
    </ligand>
</feature>
<feature type="binding site" evidence="2">
    <location>
        <position position="15"/>
    </location>
    <ligand>
        <name>Zn(2+)</name>
        <dbReference type="ChEBI" id="CHEBI:29105"/>
    </ligand>
</feature>
<feature type="binding site" evidence="2">
    <location>
        <position position="34"/>
    </location>
    <ligand>
        <name>Zn(2+)</name>
        <dbReference type="ChEBI" id="CHEBI:29105"/>
    </ligand>
</feature>
<feature type="binding site" evidence="2">
    <location>
        <position position="37"/>
    </location>
    <ligand>
        <name>Zn(2+)</name>
        <dbReference type="ChEBI" id="CHEBI:29105"/>
    </ligand>
</feature>
<feature type="binding site" evidence="1">
    <location>
        <begin position="116"/>
        <end position="123"/>
    </location>
    <ligand>
        <name>ATP</name>
        <dbReference type="ChEBI" id="CHEBI:30616"/>
    </ligand>
</feature>